<evidence type="ECO:0000255" key="1">
    <source>
        <dbReference type="HAMAP-Rule" id="MF_04080"/>
    </source>
</evidence>
<organism>
    <name type="scientific">Human immunodeficiency virus type 1 group M subtype G (isolate SE6165)</name>
    <name type="common">HIV-1</name>
    <dbReference type="NCBI Taxonomy" id="388824"/>
    <lineage>
        <taxon>Viruses</taxon>
        <taxon>Riboviria</taxon>
        <taxon>Pararnavirae</taxon>
        <taxon>Artverviricota</taxon>
        <taxon>Revtraviricetes</taxon>
        <taxon>Ortervirales</taxon>
        <taxon>Retroviridae</taxon>
        <taxon>Orthoretrovirinae</taxon>
        <taxon>Lentivirus</taxon>
        <taxon>Human immunodeficiency virus type 1</taxon>
    </lineage>
</organism>
<keyword id="KW-0010">Activator</keyword>
<keyword id="KW-0014">AIDS</keyword>
<keyword id="KW-0053">Apoptosis</keyword>
<keyword id="KW-0131">Cell cycle</keyword>
<keyword id="KW-1079">Host G2/M cell cycle arrest by virus</keyword>
<keyword id="KW-1048">Host nucleus</keyword>
<keyword id="KW-0945">Host-virus interaction</keyword>
<keyword id="KW-0407">Ion channel</keyword>
<keyword id="KW-0406">Ion transport</keyword>
<keyword id="KW-1121">Modulation of host cell cycle by virus</keyword>
<keyword id="KW-0597">Phosphoprotein</keyword>
<keyword id="KW-0804">Transcription</keyword>
<keyword id="KW-0805">Transcription regulation</keyword>
<keyword id="KW-0813">Transport</keyword>
<keyword id="KW-1163">Viral penetration into host nucleus</keyword>
<keyword id="KW-0946">Virion</keyword>
<keyword id="KW-1160">Virus entry into host cell</keyword>
<reference key="1">
    <citation type="journal article" date="1998" name="Virology">
        <title>Full genome sequences of human immunodeficiency virus type 1 subtypes G and A/G intersubtype recombinants.</title>
        <authorList>
            <person name="Carr J.K."/>
            <person name="Salminen M.O."/>
            <person name="Albert J."/>
            <person name="Sanders-Buell E."/>
            <person name="Gotte D."/>
            <person name="Birx D.L."/>
            <person name="McCutchan F.E."/>
        </authorList>
    </citation>
    <scope>NUCLEOTIDE SEQUENCE [GENOMIC DNA]</scope>
</reference>
<sequence>MEQAPEDQGPQREPYNEWALELLEELKNEAVRHFPRLWLHGLGQHIYNTYGDTWEGVEAIIRILQQLLFIHFRIGCQHSRIGITPRRRVRDGPGRS</sequence>
<dbReference type="EMBL" id="AF061642">
    <property type="protein sequence ID" value="AAC29062.1"/>
    <property type="molecule type" value="Genomic_DNA"/>
</dbReference>
<dbReference type="SMR" id="O89942"/>
<dbReference type="Proteomes" id="UP000135013">
    <property type="component" value="Segment"/>
</dbReference>
<dbReference type="GO" id="GO:0043657">
    <property type="term" value="C:host cell"/>
    <property type="evidence" value="ECO:0007669"/>
    <property type="project" value="GOC"/>
</dbReference>
<dbReference type="GO" id="GO:0042025">
    <property type="term" value="C:host cell nucleus"/>
    <property type="evidence" value="ECO:0007669"/>
    <property type="project" value="UniProtKB-SubCell"/>
</dbReference>
<dbReference type="GO" id="GO:0043655">
    <property type="term" value="C:host extracellular space"/>
    <property type="evidence" value="ECO:0007669"/>
    <property type="project" value="UniProtKB-SubCell"/>
</dbReference>
<dbReference type="GO" id="GO:0044423">
    <property type="term" value="C:virion component"/>
    <property type="evidence" value="ECO:0007669"/>
    <property type="project" value="UniProtKB-UniRule"/>
</dbReference>
<dbReference type="GO" id="GO:0006351">
    <property type="term" value="P:DNA-templated transcription"/>
    <property type="evidence" value="ECO:0007669"/>
    <property type="project" value="UniProtKB-UniRule"/>
</dbReference>
<dbReference type="GO" id="GO:0034220">
    <property type="term" value="P:monoatomic ion transmembrane transport"/>
    <property type="evidence" value="ECO:0007669"/>
    <property type="project" value="UniProtKB-KW"/>
</dbReference>
<dbReference type="GO" id="GO:0051260">
    <property type="term" value="P:protein homooligomerization"/>
    <property type="evidence" value="ECO:0007669"/>
    <property type="project" value="UniProtKB-UniRule"/>
</dbReference>
<dbReference type="GO" id="GO:0006355">
    <property type="term" value="P:regulation of DNA-templated transcription"/>
    <property type="evidence" value="ECO:0007669"/>
    <property type="project" value="UniProtKB-UniRule"/>
</dbReference>
<dbReference type="GO" id="GO:0046718">
    <property type="term" value="P:symbiont entry into host cell"/>
    <property type="evidence" value="ECO:0007669"/>
    <property type="project" value="UniProtKB-KW"/>
</dbReference>
<dbReference type="GO" id="GO:0052151">
    <property type="term" value="P:symbiont-mediated activation of host apoptosis"/>
    <property type="evidence" value="ECO:0007669"/>
    <property type="project" value="UniProtKB-UniRule"/>
</dbReference>
<dbReference type="GO" id="GO:0039592">
    <property type="term" value="P:symbiont-mediated arrest of host cell cycle during G2/M transition"/>
    <property type="evidence" value="ECO:0007669"/>
    <property type="project" value="UniProtKB-UniRule"/>
</dbReference>
<dbReference type="GO" id="GO:0075732">
    <property type="term" value="P:viral penetration into host nucleus"/>
    <property type="evidence" value="ECO:0007669"/>
    <property type="project" value="UniProtKB-UniRule"/>
</dbReference>
<dbReference type="Gene3D" id="6.10.210.10">
    <property type="match status" value="1"/>
</dbReference>
<dbReference type="Gene3D" id="1.20.5.90">
    <property type="entry name" value="VpR/VpX protein, C-terminal domain"/>
    <property type="match status" value="1"/>
</dbReference>
<dbReference type="HAMAP" id="MF_04080">
    <property type="entry name" value="HIV_VPR"/>
    <property type="match status" value="1"/>
</dbReference>
<dbReference type="InterPro" id="IPR000012">
    <property type="entry name" value="RetroV_VpR/X"/>
</dbReference>
<dbReference type="Pfam" id="PF00522">
    <property type="entry name" value="VPR"/>
    <property type="match status" value="1"/>
</dbReference>
<dbReference type="PRINTS" id="PR00444">
    <property type="entry name" value="HIVVPRVPX"/>
</dbReference>
<gene>
    <name evidence="1" type="primary">vpr</name>
</gene>
<proteinExistence type="inferred from homology"/>
<feature type="chain" id="PRO_0000246762" description="Protein Vpr">
    <location>
        <begin position="1"/>
        <end position="96"/>
    </location>
</feature>
<feature type="region of interest" description="Homooligomerization" evidence="1">
    <location>
        <begin position="1"/>
        <end position="42"/>
    </location>
</feature>
<feature type="modified residue" description="Phosphoserine; by host" evidence="1">
    <location>
        <position position="79"/>
    </location>
</feature>
<feature type="modified residue" description="Phosphoserine; by host" evidence="1">
    <location>
        <position position="96"/>
    </location>
</feature>
<name>VPR_HV1SE</name>
<accession>O89942</accession>
<comment type="function">
    <text evidence="1">During virus replication, may deplete host UNG protein, and incude G2-M cell cycle arrest. Acts by targeting specific host proteins for degradation by the 26S proteasome, through association with the cellular CUL4A-DDB1 E3 ligase complex by direct interaction with host VPRPB/DCAF-1. Cell cycle arrest reportedly occurs within hours of infection and is not blocked by antiviral agents, suggesting that it is initiated by the VPR carried into the virion. Additionally, VPR induces apoptosis in a cell cycle dependent manner suggesting that these two effects are mechanistically linked. Detected in the serum and cerebrospinal fluid of AIDS patient, VPR may also induce cell death to bystander cells.</text>
</comment>
<comment type="function">
    <text evidence="1">During virus entry, plays a role in the transport of the viral pre-integration (PIC) complex to the host nucleus. This function is crucial for viral infection of non-dividing macrophages. May act directly at the nuclear pore complex, by binding nucleoporins phenylalanine-glycine (FG)-repeat regions.</text>
</comment>
<comment type="subunit">
    <text evidence="1">Homooligomer, may form homodimer. Interacts with p6-gag region of the Pr55 Gag precursor protein through a (Leu-X-X)4 motif near the C-terminus of the P6gag protein. Interacts with host UNG. May interact with host RAD23A/HHR23A. Interacts with host VPRBP/DCAF1, leading to hijack the CUL4A-RBX1-DDB1-DCAF1/VPRBP complex, mediating ubiquitination of host proteins such as TERT and ZGPAT and arrest of the cell cycle in G2 phase.</text>
</comment>
<comment type="subcellular location">
    <subcellularLocation>
        <location evidence="1">Virion</location>
    </subcellularLocation>
    <subcellularLocation>
        <location evidence="1">Host nucleus</location>
    </subcellularLocation>
    <subcellularLocation>
        <location evidence="1">Host extracellular space</location>
    </subcellularLocation>
    <text evidence="1">Incorporation into virion is dependent on p6 GAG sequences. Lacks a canonical nuclear localization signal, thus import into nucleus may function independently of the human importin pathway. Detected in high quantity in the serum and cerebrospinal fluid of AIDS patient.</text>
</comment>
<comment type="PTM">
    <text evidence="1">Phosphorylated on several residues by host. These phosphorylations regulate VPR activity for the nuclear import of the HIV-1 pre-integration complex.</text>
</comment>
<comment type="miscellaneous">
    <text evidence="1">HIV-1 lineages are divided in three main groups, M (for Major), O (for Outlier), and N (for New, or Non-M, Non-O). The vast majority of strains found worldwide belong to the group M. Group O seems to be endemic to and largely confined to Cameroon and neighboring countries in West Central Africa, where these viruses represent a small minority of HIV-1 strains. The group N is represented by a limited number of isolates from Cameroonian persons. The group M is further subdivided in 9 clades or subtypes (A to D, F to H, J and K).</text>
</comment>
<comment type="similarity">
    <text evidence="1">Belongs to the HIV-1 VPR protein family.</text>
</comment>
<protein>
    <recommendedName>
        <fullName evidence="1">Protein Vpr</fullName>
    </recommendedName>
    <alternativeName>
        <fullName evidence="1">R ORF protein</fullName>
    </alternativeName>
    <alternativeName>
        <fullName evidence="1">Viral protein R</fullName>
    </alternativeName>
</protein>
<organismHost>
    <name type="scientific">Homo sapiens</name>
    <name type="common">Human</name>
    <dbReference type="NCBI Taxonomy" id="9606"/>
</organismHost>